<sequence length="301" mass="33304">MNWITNYVRPKINSMLGRREMPENLWIKDPSTGEMVFHKDLESNQFVIPSSGHHMRIKAKDRLRFFFDNGEYTTLEAPKVPLDPLKFRDEKKYIDRLKDYRSRTGMDDAIVNGLGTIEGLPIVATVQDFSFMGGSLGMGAGEAIIQGFEKAIELKRPFVLFASSGGARMQEGILSLMQLPRTTVAVEMLKEAGLPYIVVLTNPTTGGVTASYAMLGDIHIAEPGALIGFAGPRVIEQTIREKLPEGFQSSEYLMEHGMVDMVVSRLELKATIARLLKIMTKQPANSDAPAPQKPDADSKAA</sequence>
<organism>
    <name type="scientific">Brucella abortus biovar 1 (strain 9-941)</name>
    <dbReference type="NCBI Taxonomy" id="262698"/>
    <lineage>
        <taxon>Bacteria</taxon>
        <taxon>Pseudomonadati</taxon>
        <taxon>Pseudomonadota</taxon>
        <taxon>Alphaproteobacteria</taxon>
        <taxon>Hyphomicrobiales</taxon>
        <taxon>Brucellaceae</taxon>
        <taxon>Brucella/Ochrobactrum group</taxon>
        <taxon>Brucella</taxon>
    </lineage>
</organism>
<accession>Q57AF3</accession>
<dbReference type="EC" id="2.1.3.15" evidence="1"/>
<dbReference type="EMBL" id="AE017223">
    <property type="protein sequence ID" value="AAX75381.1"/>
    <property type="molecule type" value="Genomic_DNA"/>
</dbReference>
<dbReference type="RefSeq" id="WP_002967038.1">
    <property type="nucleotide sequence ID" value="NC_006932.1"/>
</dbReference>
<dbReference type="SMR" id="Q57AF3"/>
<dbReference type="EnsemblBacteria" id="AAX75381">
    <property type="protein sequence ID" value="AAX75381"/>
    <property type="gene ID" value="BruAb1_2082"/>
</dbReference>
<dbReference type="GeneID" id="93017586"/>
<dbReference type="KEGG" id="bmb:BruAb1_2082"/>
<dbReference type="HOGENOM" id="CLU_015486_1_0_5"/>
<dbReference type="UniPathway" id="UPA00655">
    <property type="reaction ID" value="UER00711"/>
</dbReference>
<dbReference type="Proteomes" id="UP000000540">
    <property type="component" value="Chromosome I"/>
</dbReference>
<dbReference type="GO" id="GO:0009329">
    <property type="term" value="C:acetate CoA-transferase complex"/>
    <property type="evidence" value="ECO:0007669"/>
    <property type="project" value="TreeGrafter"/>
</dbReference>
<dbReference type="GO" id="GO:0003989">
    <property type="term" value="F:acetyl-CoA carboxylase activity"/>
    <property type="evidence" value="ECO:0007669"/>
    <property type="project" value="InterPro"/>
</dbReference>
<dbReference type="GO" id="GO:0005524">
    <property type="term" value="F:ATP binding"/>
    <property type="evidence" value="ECO:0007669"/>
    <property type="project" value="UniProtKB-KW"/>
</dbReference>
<dbReference type="GO" id="GO:0016743">
    <property type="term" value="F:carboxyl- or carbamoyltransferase activity"/>
    <property type="evidence" value="ECO:0007669"/>
    <property type="project" value="UniProtKB-UniRule"/>
</dbReference>
<dbReference type="GO" id="GO:0006633">
    <property type="term" value="P:fatty acid biosynthetic process"/>
    <property type="evidence" value="ECO:0007669"/>
    <property type="project" value="UniProtKB-KW"/>
</dbReference>
<dbReference type="GO" id="GO:2001295">
    <property type="term" value="P:malonyl-CoA biosynthetic process"/>
    <property type="evidence" value="ECO:0007669"/>
    <property type="project" value="UniProtKB-UniRule"/>
</dbReference>
<dbReference type="Gene3D" id="3.90.226.10">
    <property type="entry name" value="2-enoyl-CoA Hydratase, Chain A, domain 1"/>
    <property type="match status" value="1"/>
</dbReference>
<dbReference type="HAMAP" id="MF_01395">
    <property type="entry name" value="AcetylCoA_CT_beta"/>
    <property type="match status" value="1"/>
</dbReference>
<dbReference type="InterPro" id="IPR034733">
    <property type="entry name" value="AcCoA_carboxyl_beta"/>
</dbReference>
<dbReference type="InterPro" id="IPR000438">
    <property type="entry name" value="Acetyl_CoA_COase_Trfase_b_su"/>
</dbReference>
<dbReference type="InterPro" id="IPR029045">
    <property type="entry name" value="ClpP/crotonase-like_dom_sf"/>
</dbReference>
<dbReference type="InterPro" id="IPR011762">
    <property type="entry name" value="COA_CT_N"/>
</dbReference>
<dbReference type="NCBIfam" id="TIGR00515">
    <property type="entry name" value="accD"/>
    <property type="match status" value="1"/>
</dbReference>
<dbReference type="PANTHER" id="PTHR42995">
    <property type="entry name" value="ACETYL-COENZYME A CARBOXYLASE CARBOXYL TRANSFERASE SUBUNIT BETA, CHLOROPLASTIC"/>
    <property type="match status" value="1"/>
</dbReference>
<dbReference type="PANTHER" id="PTHR42995:SF5">
    <property type="entry name" value="ACETYL-COENZYME A CARBOXYLASE CARBOXYL TRANSFERASE SUBUNIT BETA, CHLOROPLASTIC"/>
    <property type="match status" value="1"/>
</dbReference>
<dbReference type="Pfam" id="PF01039">
    <property type="entry name" value="Carboxyl_trans"/>
    <property type="match status" value="1"/>
</dbReference>
<dbReference type="PRINTS" id="PR01070">
    <property type="entry name" value="ACCCTRFRASEB"/>
</dbReference>
<dbReference type="SUPFAM" id="SSF52096">
    <property type="entry name" value="ClpP/crotonase"/>
    <property type="match status" value="1"/>
</dbReference>
<dbReference type="PROSITE" id="PS50980">
    <property type="entry name" value="COA_CT_NTER"/>
    <property type="match status" value="1"/>
</dbReference>
<comment type="function">
    <text evidence="1">Component of the acetyl coenzyme A carboxylase (ACC) complex. Biotin carboxylase (BC) catalyzes the carboxylation of biotin on its carrier protein (BCCP) and then the CO(2) group is transferred by the transcarboxylase to acetyl-CoA to form malonyl-CoA.</text>
</comment>
<comment type="catalytic activity">
    <reaction evidence="1">
        <text>N(6)-carboxybiotinyl-L-lysyl-[protein] + acetyl-CoA = N(6)-biotinyl-L-lysyl-[protein] + malonyl-CoA</text>
        <dbReference type="Rhea" id="RHEA:54728"/>
        <dbReference type="Rhea" id="RHEA-COMP:10505"/>
        <dbReference type="Rhea" id="RHEA-COMP:10506"/>
        <dbReference type="ChEBI" id="CHEBI:57288"/>
        <dbReference type="ChEBI" id="CHEBI:57384"/>
        <dbReference type="ChEBI" id="CHEBI:83144"/>
        <dbReference type="ChEBI" id="CHEBI:83145"/>
        <dbReference type="EC" id="2.1.3.15"/>
    </reaction>
</comment>
<comment type="pathway">
    <text evidence="1">Lipid metabolism; malonyl-CoA biosynthesis; malonyl-CoA from acetyl-CoA: step 1/1.</text>
</comment>
<comment type="subunit">
    <text evidence="1">Acetyl-CoA carboxylase is a heterohexamer composed of biotin carboxyl carrier protein (AccB), biotin carboxylase (AccC) and two subunits each of ACCase subunit alpha (AccA) and ACCase subunit beta (AccD).</text>
</comment>
<comment type="subcellular location">
    <subcellularLocation>
        <location evidence="1">Cytoplasm</location>
    </subcellularLocation>
</comment>
<comment type="similarity">
    <text evidence="1">Belongs to the AccD/PCCB family.</text>
</comment>
<gene>
    <name evidence="1" type="primary">accD</name>
    <name type="ordered locus">BruAb1_2082</name>
</gene>
<proteinExistence type="inferred from homology"/>
<name>ACCD_BRUAB</name>
<reference key="1">
    <citation type="journal article" date="2005" name="J. Bacteriol.">
        <title>Completion of the genome sequence of Brucella abortus and comparison to the highly similar genomes of Brucella melitensis and Brucella suis.</title>
        <authorList>
            <person name="Halling S.M."/>
            <person name="Peterson-Burch B.D."/>
            <person name="Bricker B.J."/>
            <person name="Zuerner R.L."/>
            <person name="Qing Z."/>
            <person name="Li L.-L."/>
            <person name="Kapur V."/>
            <person name="Alt D.P."/>
            <person name="Olsen S.C."/>
        </authorList>
    </citation>
    <scope>NUCLEOTIDE SEQUENCE [LARGE SCALE GENOMIC DNA]</scope>
    <source>
        <strain>9-941</strain>
    </source>
</reference>
<feature type="chain" id="PRO_0000389700" description="Acetyl-coenzyme A carboxylase carboxyl transferase subunit beta">
    <location>
        <begin position="1"/>
        <end position="301"/>
    </location>
</feature>
<feature type="domain" description="CoA carboxyltransferase N-terminal" evidence="2">
    <location>
        <begin position="25"/>
        <end position="294"/>
    </location>
</feature>
<evidence type="ECO:0000255" key="1">
    <source>
        <dbReference type="HAMAP-Rule" id="MF_01395"/>
    </source>
</evidence>
<evidence type="ECO:0000255" key="2">
    <source>
        <dbReference type="PROSITE-ProRule" id="PRU01136"/>
    </source>
</evidence>
<keyword id="KW-0067">ATP-binding</keyword>
<keyword id="KW-0963">Cytoplasm</keyword>
<keyword id="KW-0275">Fatty acid biosynthesis</keyword>
<keyword id="KW-0276">Fatty acid metabolism</keyword>
<keyword id="KW-0444">Lipid biosynthesis</keyword>
<keyword id="KW-0443">Lipid metabolism</keyword>
<keyword id="KW-0547">Nucleotide-binding</keyword>
<keyword id="KW-0808">Transferase</keyword>
<protein>
    <recommendedName>
        <fullName evidence="1">Acetyl-coenzyme A carboxylase carboxyl transferase subunit beta</fullName>
        <shortName evidence="1">ACCase subunit beta</shortName>
        <shortName evidence="1">Acetyl-CoA carboxylase carboxyltransferase subunit beta</shortName>
        <ecNumber evidence="1">2.1.3.15</ecNumber>
    </recommendedName>
</protein>